<proteinExistence type="evidence at protein level"/>
<evidence type="ECO:0000255" key="1"/>
<evidence type="ECO:0000255" key="2">
    <source>
        <dbReference type="PROSITE-ProRule" id="PRU00258"/>
    </source>
</evidence>
<evidence type="ECO:0000255" key="3">
    <source>
        <dbReference type="PROSITE-ProRule" id="PRU01348"/>
    </source>
</evidence>
<evidence type="ECO:0000255" key="4">
    <source>
        <dbReference type="PROSITE-ProRule" id="PRU01363"/>
    </source>
</evidence>
<evidence type="ECO:0000269" key="5">
    <source>
    </source>
</evidence>
<evidence type="ECO:0000303" key="6">
    <source>
    </source>
</evidence>
<evidence type="ECO:0000305" key="7">
    <source>
    </source>
</evidence>
<gene>
    <name evidence="6" type="primary">anuA</name>
    <name type="ORF">PROQFM164_S03g001174</name>
</gene>
<dbReference type="EC" id="2.3.1.-" evidence="7"/>
<dbReference type="EMBL" id="HG792017">
    <property type="protein sequence ID" value="CDM34450.1"/>
    <property type="molecule type" value="Genomic_DNA"/>
</dbReference>
<dbReference type="SMR" id="W6QDA2"/>
<dbReference type="STRING" id="1365484.W6QDA2"/>
<dbReference type="OMA" id="TSACHTF"/>
<dbReference type="OrthoDB" id="329835at2759"/>
<dbReference type="Proteomes" id="UP000030686">
    <property type="component" value="Unassembled WGS sequence"/>
</dbReference>
<dbReference type="GO" id="GO:0004312">
    <property type="term" value="F:fatty acid synthase activity"/>
    <property type="evidence" value="ECO:0007669"/>
    <property type="project" value="TreeGrafter"/>
</dbReference>
<dbReference type="GO" id="GO:0016491">
    <property type="term" value="F:oxidoreductase activity"/>
    <property type="evidence" value="ECO:0007669"/>
    <property type="project" value="UniProtKB-KW"/>
</dbReference>
<dbReference type="GO" id="GO:0006633">
    <property type="term" value="P:fatty acid biosynthetic process"/>
    <property type="evidence" value="ECO:0007669"/>
    <property type="project" value="TreeGrafter"/>
</dbReference>
<dbReference type="GO" id="GO:1901336">
    <property type="term" value="P:lactone biosynthetic process"/>
    <property type="evidence" value="ECO:0007669"/>
    <property type="project" value="UniProtKB-ARBA"/>
</dbReference>
<dbReference type="GO" id="GO:0044550">
    <property type="term" value="P:secondary metabolite biosynthetic process"/>
    <property type="evidence" value="ECO:0007669"/>
    <property type="project" value="UniProtKB-ARBA"/>
</dbReference>
<dbReference type="CDD" id="cd05195">
    <property type="entry name" value="enoyl_red"/>
    <property type="match status" value="1"/>
</dbReference>
<dbReference type="CDD" id="cd05274">
    <property type="entry name" value="KR_FAS_SDR_x"/>
    <property type="match status" value="1"/>
</dbReference>
<dbReference type="CDD" id="cd00833">
    <property type="entry name" value="PKS"/>
    <property type="match status" value="1"/>
</dbReference>
<dbReference type="FunFam" id="3.40.50.720:FF:000209">
    <property type="entry name" value="Polyketide synthase Pks12"/>
    <property type="match status" value="1"/>
</dbReference>
<dbReference type="Gene3D" id="3.30.70.3290">
    <property type="match status" value="1"/>
</dbReference>
<dbReference type="Gene3D" id="3.40.47.10">
    <property type="match status" value="1"/>
</dbReference>
<dbReference type="Gene3D" id="3.40.366.10">
    <property type="entry name" value="Malonyl-Coenzyme A Acyl Carrier Protein, domain 2"/>
    <property type="match status" value="1"/>
</dbReference>
<dbReference type="Gene3D" id="3.90.180.10">
    <property type="entry name" value="Medium-chain alcohol dehydrogenases, catalytic domain"/>
    <property type="match status" value="1"/>
</dbReference>
<dbReference type="Gene3D" id="3.40.50.720">
    <property type="entry name" value="NAD(P)-binding Rossmann-like Domain"/>
    <property type="match status" value="2"/>
</dbReference>
<dbReference type="Gene3D" id="3.10.129.110">
    <property type="entry name" value="Polyketide synthase dehydratase"/>
    <property type="match status" value="1"/>
</dbReference>
<dbReference type="InterPro" id="IPR001227">
    <property type="entry name" value="Ac_transferase_dom_sf"/>
</dbReference>
<dbReference type="InterPro" id="IPR014043">
    <property type="entry name" value="Acyl_transferase_dom"/>
</dbReference>
<dbReference type="InterPro" id="IPR016035">
    <property type="entry name" value="Acyl_Trfase/lysoPLipase"/>
</dbReference>
<dbReference type="InterPro" id="IPR013149">
    <property type="entry name" value="ADH-like_C"/>
</dbReference>
<dbReference type="InterPro" id="IPR013154">
    <property type="entry name" value="ADH-like_N"/>
</dbReference>
<dbReference type="InterPro" id="IPR011032">
    <property type="entry name" value="GroES-like_sf"/>
</dbReference>
<dbReference type="InterPro" id="IPR014031">
    <property type="entry name" value="Ketoacyl_synth_C"/>
</dbReference>
<dbReference type="InterPro" id="IPR014030">
    <property type="entry name" value="Ketoacyl_synth_N"/>
</dbReference>
<dbReference type="InterPro" id="IPR016036">
    <property type="entry name" value="Malonyl_transacylase_ACP-bd"/>
</dbReference>
<dbReference type="InterPro" id="IPR036291">
    <property type="entry name" value="NAD(P)-bd_dom_sf"/>
</dbReference>
<dbReference type="InterPro" id="IPR032821">
    <property type="entry name" value="PKS_assoc"/>
</dbReference>
<dbReference type="InterPro" id="IPR020841">
    <property type="entry name" value="PKS_Beta-ketoAc_synthase_dom"/>
</dbReference>
<dbReference type="InterPro" id="IPR042104">
    <property type="entry name" value="PKS_dehydratase_sf"/>
</dbReference>
<dbReference type="InterPro" id="IPR020807">
    <property type="entry name" value="PKS_DH"/>
</dbReference>
<dbReference type="InterPro" id="IPR049551">
    <property type="entry name" value="PKS_DH_C"/>
</dbReference>
<dbReference type="InterPro" id="IPR049552">
    <property type="entry name" value="PKS_DH_N"/>
</dbReference>
<dbReference type="InterPro" id="IPR020843">
    <property type="entry name" value="PKS_ER"/>
</dbReference>
<dbReference type="InterPro" id="IPR013968">
    <property type="entry name" value="PKS_KR"/>
</dbReference>
<dbReference type="InterPro" id="IPR049900">
    <property type="entry name" value="PKS_mFAS_DH"/>
</dbReference>
<dbReference type="InterPro" id="IPR050091">
    <property type="entry name" value="PKS_NRPS_Biosynth_Enz"/>
</dbReference>
<dbReference type="InterPro" id="IPR016039">
    <property type="entry name" value="Thiolase-like"/>
</dbReference>
<dbReference type="PANTHER" id="PTHR43775">
    <property type="entry name" value="FATTY ACID SYNTHASE"/>
    <property type="match status" value="1"/>
</dbReference>
<dbReference type="PANTHER" id="PTHR43775:SF50">
    <property type="entry name" value="HIGHLY REDUCING POLYKETIDE SYNTHASE SRDA"/>
    <property type="match status" value="1"/>
</dbReference>
<dbReference type="Pfam" id="PF00698">
    <property type="entry name" value="Acyl_transf_1"/>
    <property type="match status" value="1"/>
</dbReference>
<dbReference type="Pfam" id="PF08240">
    <property type="entry name" value="ADH_N"/>
    <property type="match status" value="1"/>
</dbReference>
<dbReference type="Pfam" id="PF00107">
    <property type="entry name" value="ADH_zinc_N"/>
    <property type="match status" value="1"/>
</dbReference>
<dbReference type="Pfam" id="PF16197">
    <property type="entry name" value="KAsynt_C_assoc"/>
    <property type="match status" value="1"/>
</dbReference>
<dbReference type="Pfam" id="PF00109">
    <property type="entry name" value="ketoacyl-synt"/>
    <property type="match status" value="1"/>
</dbReference>
<dbReference type="Pfam" id="PF02801">
    <property type="entry name" value="Ketoacyl-synt_C"/>
    <property type="match status" value="1"/>
</dbReference>
<dbReference type="Pfam" id="PF08659">
    <property type="entry name" value="KR"/>
    <property type="match status" value="1"/>
</dbReference>
<dbReference type="Pfam" id="PF21089">
    <property type="entry name" value="PKS_DH_N"/>
    <property type="match status" value="1"/>
</dbReference>
<dbReference type="Pfam" id="PF14765">
    <property type="entry name" value="PS-DH"/>
    <property type="match status" value="1"/>
</dbReference>
<dbReference type="SMART" id="SM00827">
    <property type="entry name" value="PKS_AT"/>
    <property type="match status" value="1"/>
</dbReference>
<dbReference type="SMART" id="SM00826">
    <property type="entry name" value="PKS_DH"/>
    <property type="match status" value="1"/>
</dbReference>
<dbReference type="SMART" id="SM00829">
    <property type="entry name" value="PKS_ER"/>
    <property type="match status" value="1"/>
</dbReference>
<dbReference type="SMART" id="SM00822">
    <property type="entry name" value="PKS_KR"/>
    <property type="match status" value="1"/>
</dbReference>
<dbReference type="SMART" id="SM00825">
    <property type="entry name" value="PKS_KS"/>
    <property type="match status" value="1"/>
</dbReference>
<dbReference type="SUPFAM" id="SSF52151">
    <property type="entry name" value="FabD/lysophospholipase-like"/>
    <property type="match status" value="1"/>
</dbReference>
<dbReference type="SUPFAM" id="SSF50129">
    <property type="entry name" value="GroES-like"/>
    <property type="match status" value="1"/>
</dbReference>
<dbReference type="SUPFAM" id="SSF51735">
    <property type="entry name" value="NAD(P)-binding Rossmann-fold domains"/>
    <property type="match status" value="2"/>
</dbReference>
<dbReference type="SUPFAM" id="SSF55048">
    <property type="entry name" value="Probable ACP-binding domain of malonyl-CoA ACP transacylase"/>
    <property type="match status" value="1"/>
</dbReference>
<dbReference type="SUPFAM" id="SSF53901">
    <property type="entry name" value="Thiolase-like"/>
    <property type="match status" value="1"/>
</dbReference>
<dbReference type="PROSITE" id="PS52004">
    <property type="entry name" value="KS3_2"/>
    <property type="match status" value="1"/>
</dbReference>
<dbReference type="PROSITE" id="PS52019">
    <property type="entry name" value="PKS_MFAS_DH"/>
    <property type="match status" value="1"/>
</dbReference>
<reference key="1">
    <citation type="journal article" date="2014" name="Nat. Commun.">
        <title>Multiple recent horizontal transfers of a large genomic region in cheese making fungi.</title>
        <authorList>
            <person name="Cheeseman K."/>
            <person name="Ropars J."/>
            <person name="Renault P."/>
            <person name="Dupont J."/>
            <person name="Gouzy J."/>
            <person name="Branca A."/>
            <person name="Abraham A.-L."/>
            <person name="Ceppi M."/>
            <person name="Conseiller E."/>
            <person name="Debuchy R."/>
            <person name="Malagnac F."/>
            <person name="Goarin A."/>
            <person name="Silar P."/>
            <person name="Lacoste S."/>
            <person name="Sallet E."/>
            <person name="Bensimon A."/>
            <person name="Giraud T."/>
            <person name="Brygoo Y."/>
        </authorList>
    </citation>
    <scope>NUCLEOTIDE SEQUENCE [LARGE SCALE GENOMIC DNA]</scope>
    <source>
        <strain>FM164</strain>
    </source>
</reference>
<reference key="2">
    <citation type="journal article" date="2022" name="Org. Lett.">
        <title>Biosynthesis of Annullatin D in Penicillium roqueforti Implies Oxidative Lactonization between Two Hydroxyl Groups Catalyzed by a BBE-like Enzyme.</title>
        <authorList>
            <person name="Xiang P."/>
            <person name="Kemmerich B."/>
            <person name="Yang L."/>
            <person name="Li S.M."/>
        </authorList>
    </citation>
    <scope>FUNCTION</scope>
    <scope>CATALYTIC ACTIVITY</scope>
    <scope>PATHWAY</scope>
</reference>
<protein>
    <recommendedName>
        <fullName evidence="6">Highly reducing polyketide synthase anuA</fullName>
        <shortName evidence="6">HRPKS anuA</shortName>
        <ecNumber evidence="7">2.3.1.-</ecNumber>
    </recommendedName>
    <alternativeName>
        <fullName evidence="6">Annullatin D biosynthesis cluster protein A</fullName>
    </alternativeName>
</protein>
<feature type="chain" id="PRO_0000458207" description="Highly reducing polyketide synthase anuA">
    <location>
        <begin position="1"/>
        <end position="2130"/>
    </location>
</feature>
<feature type="domain" description="Ketosynthase family 3 (KS3)" evidence="3">
    <location>
        <begin position="1"/>
        <end position="213"/>
    </location>
</feature>
<feature type="domain" description="Malonyl-CoA:ACP transacylase (MAT)" evidence="1">
    <location>
        <begin position="317"/>
        <end position="644"/>
    </location>
</feature>
<feature type="domain" description="PKS/mFAS DH" evidence="4">
    <location>
        <begin position="701"/>
        <end position="1000"/>
    </location>
</feature>
<feature type="domain" description="Enoyl reductase (ER)" evidence="1">
    <location>
        <begin position="1405"/>
        <end position="1722"/>
    </location>
</feature>
<feature type="domain" description="Ketoreductase (KR)" evidence="1">
    <location>
        <begin position="1747"/>
        <end position="1927"/>
    </location>
</feature>
<feature type="domain" description="Carrier" evidence="2">
    <location>
        <begin position="2047"/>
        <end position="2125"/>
    </location>
</feature>
<feature type="region of interest" description="N-terminal hotdog fold" evidence="4">
    <location>
        <begin position="701"/>
        <end position="836"/>
    </location>
</feature>
<feature type="region of interest" description="C-terminal hotdog fold" evidence="4">
    <location>
        <begin position="849"/>
        <end position="1000"/>
    </location>
</feature>
<feature type="active site" description="Proton acceptor; for dehydratase activity" evidence="4">
    <location>
        <position position="733"/>
    </location>
</feature>
<feature type="active site" description="Proton donor; for dehydratase activity" evidence="4">
    <location>
        <position position="914"/>
    </location>
</feature>
<feature type="modified residue" description="O-(pantetheine 4'-phosphoryl)serine" evidence="2">
    <location>
        <position position="2084"/>
    </location>
</feature>
<name>ANUA_PENRF</name>
<comment type="function">
    <text evidence="5 7">Highly reducing polyketide synthase; part of the gene cluster that mediates the biosynthesis of annullatin D, an alkylated aromatic polyketide with a fused dihydrobenzofuran lactone ring system that exhibits potent agonistic activities toward the cannabinoid receptors (PubMed:35939524). The annullatin backbone 2-hydroxymethyl-3-pentylphenol is assembled from one acetyl-CoA starter unit and 5 malonyl-CoA elongation units by cooperation of the highly reducing polyketide synthase anuA, the short-chain dehydrogenase anuB and the oxidoreductase anuC, before being hydroxylated at the C-5 alkyl chain by the cytochrome P450 monooxygenase anuE to form (8S)-annullatin E. The prenyltransferase anuH subsequently installs one isoprenyl group at the benzene ring to form (8S)-annullatin J. Enzymatic or nonenzymatic dihydro-benzofuran ring formation between the prenyl and the phenolic hydroxyl groups in (8S)-annullatin J results in two diastereomers (2S,9S)-annullatin H and compound 12. The intermediate (2S,9S)-annullatin H is then converted to (2S,9S)-annullatin D by the FAD-linked oxidoreductase anuG-catalyzed five-member lactone ring formation. The isomer 12 acts as a substrate for the short-chain dehydrogenase anuF and is oxidized to (2R)-annullatin F, which is subsequently acetylated by an acetyltransferase leading to (2R)-annullatin G formation. The remaining enzymes identified within the cluster, anuD, anuI and anuJ, seem not to be involved in annullatin biosynthesis (Probable).</text>
</comment>
<comment type="cofactor">
    <cofactor evidence="2">
        <name>pantetheine 4'-phosphate</name>
        <dbReference type="ChEBI" id="CHEBI:47942"/>
    </cofactor>
</comment>
<comment type="pathway">
    <text evidence="7">Secondary metabolite biosynthesis.</text>
</comment>
<comment type="domain">
    <text evidence="7">Multidomain protein; including a ketosynthase (KS) that catalyzes repeated decarboxylative condensation to elongate the polyketide backbone; a malonyl-CoA:ACP transacylase (MAT) that selects and transfers the extender unit malonyl-CoA; a dehydratase (DH) domain that reduces hydroxyl groups to enoyl groups; an enoyl reductase (ER) domain that reduces enoyl groups to alkyl group; a ketoreductase (KR) domain that catalyzes beta-ketoreduction steps; and an acyl-carrier protein (ACP) that serves as the tether of the growing and completed polyketide via its phosphopantetheinyl arm.</text>
</comment>
<organism>
    <name type="scientific">Penicillium roqueforti (strain FM164)</name>
    <dbReference type="NCBI Taxonomy" id="1365484"/>
    <lineage>
        <taxon>Eukaryota</taxon>
        <taxon>Fungi</taxon>
        <taxon>Dikarya</taxon>
        <taxon>Ascomycota</taxon>
        <taxon>Pezizomycotina</taxon>
        <taxon>Eurotiomycetes</taxon>
        <taxon>Eurotiomycetidae</taxon>
        <taxon>Eurotiales</taxon>
        <taxon>Aspergillaceae</taxon>
        <taxon>Penicillium</taxon>
    </lineage>
</organism>
<accession>W6QDA2</accession>
<sequence length="2130" mass="231959">MKAGVLSGTSACHTFDTSADGYGRADGIGALYVKRLEDALRDGDPIRSLIRGSAVNANGKTSGISLPSADGQEAVIQKAMAKGGIVPDDITFVECHGTGTKVGDAIEVEALSRVFQRTPNNPLMIGSVKSNVGHSEAASGISSVIKSTLALERGQIPPTHGLKNINPKLKVEDRNIKIPTELTNWPNHSSRVRRVGINSFGYGGANCHVILEQPTKTLSSSRQLRQLPITQSTVILPLSAASTASLEARVADFARYEFGDTDIADLAYTLGSRRTHFAERGFLLAPRSQEISHSFQTRTWVTSASPVTGVASTPFAFVFTGQGSQWPGMCRELLSEFSLFRDTITEMDSVLKSLPGPPSWSLMEAILDVDNPSLIHLPQRSQPCCTAIQVALIRLLSSWEIAPTMTVGHSSGEIAAAFAAGHVSAAEAIVIAYYRGYCVSKSTRVGAMMAIGLSESSTTDEIAKAGLDDQIRVACVNSPEGVTVSGDENALDIFLATLQQRNIFARKLKTGGQAYHSHHMVSIGEEYQALLERALPSLGPSIRQPQGASVMSSVTGELKSSGFTASYWRSNLESQVRFAHAIERIHELTEHCFIELGPHSSLELPIKQTLAKAGAELKYAAPIKRNVDSMESILSFAGNLWLKGYEINWSKVNGLQTGLKSVRSMYRVVTDLPPYRFNYENILWNECRASVEYRQRKYPHHELLGSLLTGGNARDKIFRNILKVDDVSWLKDHKLGDTVVFPGAGYLAMAMEAVMQATDAARTDPTFQFSNVNITNALTLNTEFSTSAEIFTSLHKSVITNAATSATWWDFAISSYHNGSAVQHASGSIAIHPRNAALQSKYKPPSGALESTAKRTWYEKFIRQGLNYGPTFQTISEFYTPRMKSESFASATAPLLKTSGDSISVYPVHPIALDGMIQLAVVAATNGKPKELRAQIPTRLPSAIVHTSTSSNQTCQMHAVVKRIGFGYTHAGIEMIDSDGQIVAQFDDIRLSPYQSTSQADIEDKRHPVLRVLWKPDIYGLGLMAMDDAQHHVQKFADEAHSPVSGPLLKMGAMLDLLAHKNPRLRILEIGNDVQDITLAVLGLLSAQGSFKRLSAYSTASVSDDGTILGGLLNLETGERCSSPTELDHEYDLILLPAMNEHIDRAVDTFGGLMADDASILALCPGLTSNSFASRGLDCLPVRLSEDGTTLIVARKPQELQQVSLQRHKFLIVEREKTALGSALADTLKPIQGQWVMRVRLNELTPAHVSSGTTIFNLCEIKSPLLSVISDDEMARVKVMTDNATLLVWVTNGNIMHGDRPDFALVSGLARALMLEQPSLKLYTYDIDEPETQIHMTAKRLVSLLTQPGKKPDLEFAQRKGVVHVSRFTPDDSINTLFRNKQGLETTESSLHDAKDVRLAIEQAGQLDTIYFQQLKAPQTIGPTDLRIRVASVGLNAKDYYVLVGRVDTPDATCQLECAGTVEQVGSLVTDFAPGDRVVAMAPSHFQTYQTLPQWACHKLTDAESFDISATLPIVYATAIYALHYRAHIQAGETVLIHSGAGGVGIAAIQLALHAGAEVFTTVSSDEKKKFLVDKLGVKASNIFSSRDTSFLEGIFSATSGRGVDVILNSLTGDQLHATWRCCAAFGRFVEIGKMDLTTAGRLEMDQFLQSTTFTAFDLSHLYHTDSEQLHSLWNDLLSQVMKLYRQGTITAFEPLNIFDIGETEQAFRYFSSRSRIGKVAINLERAESTIPIQPLRHTTQFDSEKSYVMVGCLGGLGRTLSRWMVNRGARKFTFLGRSGIDKAAARHLVQDLEASGARCEVVRGDVCEASDVEAVITAAAAMGEIGGVVQAAMGLNEAIFSVMPNEYWHTGIDPKVQGSWNLYNSLQMHGRGSHLDFFLMTSSVSGSVGTATESNYCAANHFLDQFSRFLRNQGYPAVAVGLGMISEVGYLHDNPEIEALLLRKGIQAIDADELLQLIDLALSSSATMGISHAHDELAASHLLTGLEAFGLKELRKRGFEGSHPALDDPRANLLASALDGGSDESSQAQNGSLPAEVTTLMQSGHTLDEAVLDHIRRRFGNLVLLKYEVVDVKKPLLQYGMDSMIGAEFRTWFYQSLTTDVPLVMLLGSSCTLESLRDLAMTSLEVGKS</sequence>
<keyword id="KW-0012">Acyltransferase</keyword>
<keyword id="KW-0511">Multifunctional enzyme</keyword>
<keyword id="KW-0521">NADP</keyword>
<keyword id="KW-0560">Oxidoreductase</keyword>
<keyword id="KW-0596">Phosphopantetheine</keyword>
<keyword id="KW-0597">Phosphoprotein</keyword>
<keyword id="KW-1185">Reference proteome</keyword>
<keyword id="KW-0808">Transferase</keyword>